<name>RIFK_METJA</name>
<dbReference type="EC" id="2.7.1.161"/>
<dbReference type="EMBL" id="L77117">
    <property type="protein sequence ID" value="AAB98036.1"/>
    <property type="status" value="ALT_INIT"/>
    <property type="molecule type" value="Genomic_DNA"/>
</dbReference>
<dbReference type="PIR" id="H64306">
    <property type="entry name" value="H64306"/>
</dbReference>
<dbReference type="RefSeq" id="WP_064496379.1">
    <property type="nucleotide sequence ID" value="NC_000909.1"/>
</dbReference>
<dbReference type="PDB" id="2OYN">
    <property type="method" value="X-ray"/>
    <property type="resolution" value="1.85 A"/>
    <property type="chains" value="A=1-132"/>
</dbReference>
<dbReference type="PDB" id="2P3M">
    <property type="method" value="NMR"/>
    <property type="chains" value="A=1-132"/>
</dbReference>
<dbReference type="PDB" id="2VBS">
    <property type="method" value="X-ray"/>
    <property type="resolution" value="3.00 A"/>
    <property type="chains" value="A=1-132"/>
</dbReference>
<dbReference type="PDB" id="2VBT">
    <property type="method" value="X-ray"/>
    <property type="resolution" value="2.70 A"/>
    <property type="chains" value="A=1-132"/>
</dbReference>
<dbReference type="PDB" id="2VBU">
    <property type="method" value="X-ray"/>
    <property type="resolution" value="1.70 A"/>
    <property type="chains" value="A=1-132"/>
</dbReference>
<dbReference type="PDB" id="2VBV">
    <property type="method" value="X-ray"/>
    <property type="resolution" value="2.40 A"/>
    <property type="chains" value="A/B=1-132"/>
</dbReference>
<dbReference type="PDBsum" id="2OYN"/>
<dbReference type="PDBsum" id="2P3M"/>
<dbReference type="PDBsum" id="2VBS"/>
<dbReference type="PDBsum" id="2VBT"/>
<dbReference type="PDBsum" id="2VBU"/>
<dbReference type="PDBsum" id="2VBV"/>
<dbReference type="BMRB" id="Q60365"/>
<dbReference type="SMR" id="Q60365"/>
<dbReference type="FunCoup" id="Q60365">
    <property type="interactions" value="20"/>
</dbReference>
<dbReference type="STRING" id="243232.MJ_0056"/>
<dbReference type="PaxDb" id="243232-MJ_0056"/>
<dbReference type="EnsemblBacteria" id="AAB98036">
    <property type="protein sequence ID" value="AAB98036"/>
    <property type="gene ID" value="MJ_0056"/>
</dbReference>
<dbReference type="GeneID" id="1450895"/>
<dbReference type="KEGG" id="mja:MJ_0056"/>
<dbReference type="eggNOG" id="arCOG01904">
    <property type="taxonomic scope" value="Archaea"/>
</dbReference>
<dbReference type="HOGENOM" id="CLU_140165_0_0_2"/>
<dbReference type="InParanoid" id="Q60365"/>
<dbReference type="OrthoDB" id="30955at2157"/>
<dbReference type="PhylomeDB" id="Q60365"/>
<dbReference type="BioCyc" id="MetaCyc:MONOMER-13864"/>
<dbReference type="BRENDA" id="2.7.1.161">
    <property type="organism ID" value="3260"/>
</dbReference>
<dbReference type="SABIO-RK" id="Q60365"/>
<dbReference type="UniPathway" id="UPA00276">
    <property type="reaction ID" value="UER00929"/>
</dbReference>
<dbReference type="EvolutionaryTrace" id="Q60365"/>
<dbReference type="Proteomes" id="UP000000805">
    <property type="component" value="Chromosome"/>
</dbReference>
<dbReference type="GO" id="GO:0000287">
    <property type="term" value="F:magnesium ion binding"/>
    <property type="evidence" value="ECO:0007669"/>
    <property type="project" value="UniProtKB-UniRule"/>
</dbReference>
<dbReference type="GO" id="GO:0000166">
    <property type="term" value="F:nucleotide binding"/>
    <property type="evidence" value="ECO:0007669"/>
    <property type="project" value="UniProtKB-UniRule"/>
</dbReference>
<dbReference type="GO" id="GO:0008531">
    <property type="term" value="F:riboflavin kinase activity"/>
    <property type="evidence" value="ECO:0007669"/>
    <property type="project" value="InterPro"/>
</dbReference>
<dbReference type="GO" id="GO:0009398">
    <property type="term" value="P:FMN biosynthetic process"/>
    <property type="evidence" value="ECO:0007669"/>
    <property type="project" value="UniProtKB-UniRule"/>
</dbReference>
<dbReference type="GO" id="GO:0009231">
    <property type="term" value="P:riboflavin biosynthetic process"/>
    <property type="evidence" value="ECO:0007669"/>
    <property type="project" value="InterPro"/>
</dbReference>
<dbReference type="Gene3D" id="2.40.30.30">
    <property type="entry name" value="Riboflavin kinase-like"/>
    <property type="match status" value="1"/>
</dbReference>
<dbReference type="HAMAP" id="MF_01285">
    <property type="entry name" value="Riboflavin_kinase"/>
    <property type="match status" value="1"/>
</dbReference>
<dbReference type="InterPro" id="IPR053397">
    <property type="entry name" value="Archaeal_Riboflavin_Kinase"/>
</dbReference>
<dbReference type="InterPro" id="IPR039063">
    <property type="entry name" value="RibK_CTP-dep"/>
</dbReference>
<dbReference type="InterPro" id="IPR023470">
    <property type="entry name" value="Riboflavin_kinase_archaeal"/>
</dbReference>
<dbReference type="InterPro" id="IPR023602">
    <property type="entry name" value="Riboflavin_kinase_CTP-dep"/>
</dbReference>
<dbReference type="InterPro" id="IPR023465">
    <property type="entry name" value="Riboflavin_kinase_dom_sf"/>
</dbReference>
<dbReference type="NCBIfam" id="NF040694">
    <property type="entry name" value="ribK_Meth"/>
    <property type="match status" value="1"/>
</dbReference>
<dbReference type="PANTHER" id="PTHR40706">
    <property type="entry name" value="RIBOFLAVIN KINASE"/>
    <property type="match status" value="1"/>
</dbReference>
<dbReference type="PANTHER" id="PTHR40706:SF1">
    <property type="entry name" value="RIBOFLAVIN KINASE"/>
    <property type="match status" value="1"/>
</dbReference>
<dbReference type="Pfam" id="PF01982">
    <property type="entry name" value="CTP-dep_RFKase"/>
    <property type="match status" value="1"/>
</dbReference>
<dbReference type="SUPFAM" id="SSF82114">
    <property type="entry name" value="Riboflavin kinase-like"/>
    <property type="match status" value="1"/>
</dbReference>
<protein>
    <recommendedName>
        <fullName>Riboflavin kinase</fullName>
        <shortName>RFK</shortName>
        <ecNumber>2.7.1.161</ecNumber>
    </recommendedName>
    <alternativeName>
        <fullName>CTP-dependent riboflavin kinase</fullName>
    </alternativeName>
    <alternativeName>
        <fullName>CTP:riboflavin 5'-phosphotransferase</fullName>
    </alternativeName>
    <alternativeName>
        <fullName>Flavokinase</fullName>
    </alternativeName>
</protein>
<evidence type="ECO:0000269" key="1">
    <source>
    </source>
</evidence>
<evidence type="ECO:0000269" key="2">
    <source>
    </source>
</evidence>
<evidence type="ECO:0000269" key="3">
    <source ref="3"/>
</evidence>
<evidence type="ECO:0000305" key="4"/>
<evidence type="ECO:0007829" key="5">
    <source>
        <dbReference type="PDB" id="2P3M"/>
    </source>
</evidence>
<evidence type="ECO:0007829" key="6">
    <source>
        <dbReference type="PDB" id="2VBU"/>
    </source>
</evidence>
<comment type="function">
    <text evidence="1 2">Catalyzes the CTP-dependent phosphorylation of riboflavin (vitamin B2) to form flavin mononucleotide (FMN). Can also utilize UTP as the phosphate donor, although less efficiently, and it is unclear if ATP and GTP can also serve as substrates (PubMed:18245297) or not (PubMed:18073108).</text>
</comment>
<comment type="catalytic activity">
    <reaction evidence="1 2">
        <text>riboflavin + CTP = CDP + FMN + H(+)</text>
        <dbReference type="Rhea" id="RHEA:25021"/>
        <dbReference type="ChEBI" id="CHEBI:15378"/>
        <dbReference type="ChEBI" id="CHEBI:37563"/>
        <dbReference type="ChEBI" id="CHEBI:57986"/>
        <dbReference type="ChEBI" id="CHEBI:58069"/>
        <dbReference type="ChEBI" id="CHEBI:58210"/>
        <dbReference type="EC" id="2.7.1.161"/>
    </reaction>
</comment>
<comment type="cofactor">
    <cofactor>
        <name>Mg(2+)</name>
        <dbReference type="ChEBI" id="CHEBI:18420"/>
    </cofactor>
    <text>Binds 1 magnesium ion per subunit. This ion is coordinated by a threonine and an asparagine, and by the alpha- and beta-phosphates of CDP.</text>
</comment>
<comment type="biophysicochemical properties">
    <kinetics>
        <KM evidence="2">159 uM for riboflavin</KM>
        <KM evidence="2">1.8 mM for CTP</KM>
        <Vmax evidence="2">1.3 umol/min/mg enzyme</Vmax>
    </kinetics>
</comment>
<comment type="pathway">
    <text>Cofactor biosynthesis; FMN biosynthesis; FMN from riboflavin (CTP route): step 1/1.</text>
</comment>
<comment type="subunit">
    <text evidence="1 2 3">Monomer.</text>
</comment>
<comment type="mass spectrometry" mass="15218.1" error="10.0" method="Electrospray" evidence="2"/>
<comment type="similarity">
    <text evidence="4">Belongs to the archaeal riboflavin kinase family.</text>
</comment>
<comment type="sequence caution" evidence="4">
    <conflict type="erroneous initiation">
        <sequence resource="EMBL-CDS" id="AAB98036"/>
    </conflict>
    <text>Extended N-terminus.</text>
</comment>
<organism>
    <name type="scientific">Methanocaldococcus jannaschii (strain ATCC 43067 / DSM 2661 / JAL-1 / JCM 10045 / NBRC 100440)</name>
    <name type="common">Methanococcus jannaschii</name>
    <dbReference type="NCBI Taxonomy" id="243232"/>
    <lineage>
        <taxon>Archaea</taxon>
        <taxon>Methanobacteriati</taxon>
        <taxon>Methanobacteriota</taxon>
        <taxon>Methanomada group</taxon>
        <taxon>Methanococci</taxon>
        <taxon>Methanococcales</taxon>
        <taxon>Methanocaldococcaceae</taxon>
        <taxon>Methanocaldococcus</taxon>
    </lineage>
</organism>
<gene>
    <name type="primary">ribK</name>
    <name type="ordered locus">MJ0056</name>
</gene>
<reference key="1">
    <citation type="journal article" date="1996" name="Science">
        <title>Complete genome sequence of the methanogenic archaeon, Methanococcus jannaschii.</title>
        <authorList>
            <person name="Bult C.J."/>
            <person name="White O."/>
            <person name="Olsen G.J."/>
            <person name="Zhou L."/>
            <person name="Fleischmann R.D."/>
            <person name="Sutton G.G."/>
            <person name="Blake J.A."/>
            <person name="FitzGerald L.M."/>
            <person name="Clayton R.A."/>
            <person name="Gocayne J.D."/>
            <person name="Kerlavage A.R."/>
            <person name="Dougherty B.A."/>
            <person name="Tomb J.-F."/>
            <person name="Adams M.D."/>
            <person name="Reich C.I."/>
            <person name="Overbeek R."/>
            <person name="Kirkness E.F."/>
            <person name="Weinstock K.G."/>
            <person name="Merrick J.M."/>
            <person name="Glodek A."/>
            <person name="Scott J.L."/>
            <person name="Geoghagen N.S.M."/>
            <person name="Weidman J.F."/>
            <person name="Fuhrmann J.L."/>
            <person name="Nguyen D."/>
            <person name="Utterback T.R."/>
            <person name="Kelley J.M."/>
            <person name="Peterson J.D."/>
            <person name="Sadow P.W."/>
            <person name="Hanna M.C."/>
            <person name="Cotton M.D."/>
            <person name="Roberts K.M."/>
            <person name="Hurst M.A."/>
            <person name="Kaine B.P."/>
            <person name="Borodovsky M."/>
            <person name="Klenk H.-P."/>
            <person name="Fraser C.M."/>
            <person name="Smith H.O."/>
            <person name="Woese C.R."/>
            <person name="Venter J.C."/>
        </authorList>
    </citation>
    <scope>NUCLEOTIDE SEQUENCE [LARGE SCALE GENOMIC DNA]</scope>
    <source>
        <strain>ATCC 43067 / DSM 2661 / JAL-1 / JCM 10045 / NBRC 100440</strain>
    </source>
</reference>
<reference key="2">
    <citation type="journal article" date="2008" name="J. Bacteriol.">
        <title>Identification and characterization of an archaeon-specific riboflavin kinase.</title>
        <authorList>
            <person name="Mashhadi Z."/>
            <person name="Zhang H."/>
            <person name="Xu H."/>
            <person name="White R.H."/>
        </authorList>
    </citation>
    <scope>FUNCTION</scope>
    <scope>CATALYTIC ACTIVITY</scope>
    <scope>KINETIC PARAMETERS</scope>
    <scope>SUBSTRATE SPECIFICITY</scope>
    <scope>GENE NAME</scope>
    <scope>MASS SPECTROMETRY</scope>
    <scope>SUBUNIT</scope>
</reference>
<reference key="3">
    <citation type="submission" date="2007-03" db="PDB data bank">
        <title>Crystal structure of hypothetical protein from Methanococcus jannaschii bound to CDP.</title>
        <authorList>
            <consortium name="New York structural genomics research consortium (NYSGRC)"/>
        </authorList>
    </citation>
    <scope>X-RAY CRYSTALLOGRAPHY (1.85 ANGSTROMS) IN COMPLEX WITH CDP</scope>
</reference>
<reference key="4">
    <citation type="journal article" date="2007" name="Structure">
        <title>A CTP-dependent archaeal riboflavin kinase forms a bridge in the evolution of cradle-loop barrels.</title>
        <authorList>
            <person name="Ammelburg M."/>
            <person name="Hartmann M.D."/>
            <person name="Djuranovic S."/>
            <person name="Alva V."/>
            <person name="Koretke K.K."/>
            <person name="Martin J."/>
            <person name="Sauer G."/>
            <person name="Truffault V."/>
            <person name="Zeth K."/>
            <person name="Lupas A.N."/>
            <person name="Coles M."/>
        </authorList>
    </citation>
    <scope>X-RAY CRYSTALLOGRAPHY (1.7 ANGSTROMS) OF APOENZYME AND IN COMPLEX WITH REACTION PRODUCTS AND MAGNESIUM</scope>
    <scope>STRUCTURE BY NMR</scope>
    <scope>FUNCTION</scope>
    <scope>CATALYTIC ACTIVITY</scope>
    <scope>CHARACTERIZATION</scope>
    <scope>SUBSTRATE SPECIFICITY</scope>
    <scope>SUBUNIT</scope>
</reference>
<keyword id="KW-0002">3D-structure</keyword>
<keyword id="KW-0285">Flavoprotein</keyword>
<keyword id="KW-0288">FMN</keyword>
<keyword id="KW-0418">Kinase</keyword>
<keyword id="KW-0460">Magnesium</keyword>
<keyword id="KW-0479">Metal-binding</keyword>
<keyword id="KW-0547">Nucleotide-binding</keyword>
<keyword id="KW-1185">Reference proteome</keyword>
<keyword id="KW-0808">Transferase</keyword>
<feature type="chain" id="PRO_0000106673" description="Riboflavin kinase">
    <location>
        <begin position="1"/>
        <end position="132"/>
    </location>
</feature>
<feature type="binding site" evidence="3">
    <location>
        <begin position="10"/>
        <end position="15"/>
    </location>
    <ligand>
        <name>CDP</name>
        <dbReference type="ChEBI" id="CHEBI:58069"/>
    </ligand>
</feature>
<feature type="binding site" evidence="1">
    <location>
        <position position="39"/>
    </location>
    <ligand>
        <name>Mg(2+)</name>
        <dbReference type="ChEBI" id="CHEBI:18420"/>
    </ligand>
</feature>
<feature type="binding site" evidence="1">
    <location>
        <position position="41"/>
    </location>
    <ligand>
        <name>Mg(2+)</name>
        <dbReference type="ChEBI" id="CHEBI:18420"/>
    </ligand>
</feature>
<feature type="binding site">
    <location>
        <position position="95"/>
    </location>
    <ligand>
        <name>FMN</name>
        <dbReference type="ChEBI" id="CHEBI:58210"/>
    </ligand>
</feature>
<feature type="binding site">
    <location>
        <position position="96"/>
    </location>
    <ligand>
        <name>FMN</name>
        <dbReference type="ChEBI" id="CHEBI:58210"/>
    </ligand>
</feature>
<feature type="binding site">
    <location>
        <position position="103"/>
    </location>
    <ligand>
        <name>FMN</name>
        <dbReference type="ChEBI" id="CHEBI:58210"/>
    </ligand>
</feature>
<feature type="binding site" evidence="3">
    <location>
        <begin position="108"/>
        <end position="111"/>
    </location>
    <ligand>
        <name>CDP</name>
        <dbReference type="ChEBI" id="CHEBI:58069"/>
    </ligand>
</feature>
<feature type="strand" evidence="6">
    <location>
        <begin position="1"/>
        <end position="8"/>
    </location>
</feature>
<feature type="helix" evidence="6">
    <location>
        <begin position="13"/>
        <end position="18"/>
    </location>
</feature>
<feature type="helix" evidence="6">
    <location>
        <begin position="21"/>
        <end position="31"/>
    </location>
</feature>
<feature type="strand" evidence="6">
    <location>
        <begin position="40"/>
        <end position="48"/>
    </location>
</feature>
<feature type="helix" evidence="6">
    <location>
        <begin position="50"/>
        <end position="52"/>
    </location>
</feature>
<feature type="strand" evidence="5">
    <location>
        <begin position="56"/>
        <end position="58"/>
    </location>
</feature>
<feature type="strand" evidence="6">
    <location>
        <begin position="61"/>
        <end position="63"/>
    </location>
</feature>
<feature type="strand" evidence="6">
    <location>
        <begin position="66"/>
        <end position="68"/>
    </location>
</feature>
<feature type="strand" evidence="6">
    <location>
        <begin position="71"/>
        <end position="80"/>
    </location>
</feature>
<feature type="strand" evidence="6">
    <location>
        <begin position="83"/>
        <end position="93"/>
    </location>
</feature>
<feature type="strand" evidence="6">
    <location>
        <begin position="99"/>
        <end position="105"/>
    </location>
</feature>
<feature type="helix" evidence="6">
    <location>
        <begin position="110"/>
        <end position="113"/>
    </location>
</feature>
<feature type="strand" evidence="6">
    <location>
        <begin position="121"/>
        <end position="127"/>
    </location>
</feature>
<accession>Q60365</accession>
<sequence length="132" mass="15214">MIIEGEVVSGLGEGRYFLSLPPYKEIFKKILGFEPYEGTLNLKLDREFDINKFKYIETEDFEFNGKRFFGVKVLPIKILIGNKKIDGAIVVPKKTYHSSEIIEIIAPMKLREQFNLKDGDVIKILIKGDKDE</sequence>
<proteinExistence type="evidence at protein level"/>